<protein>
    <recommendedName>
        <fullName evidence="1">Pyrimidine/purine nucleoside phosphorylase</fullName>
        <ecNumber evidence="1">2.4.2.1</ecNumber>
        <ecNumber evidence="1">2.4.2.2</ecNumber>
    </recommendedName>
    <alternativeName>
        <fullName evidence="1">Adenosine phosphorylase</fullName>
    </alternativeName>
    <alternativeName>
        <fullName evidence="1">Cytidine phosphorylase</fullName>
    </alternativeName>
    <alternativeName>
        <fullName evidence="1">Guanosine phosphorylase</fullName>
    </alternativeName>
    <alternativeName>
        <fullName evidence="1">Inosine phosphorylase</fullName>
    </alternativeName>
    <alternativeName>
        <fullName evidence="1">Thymidine phosphorylase</fullName>
    </alternativeName>
    <alternativeName>
        <fullName evidence="1">Uridine phosphorylase</fullName>
    </alternativeName>
    <alternativeName>
        <fullName evidence="1">Xanthosine phosphorylase</fullName>
    </alternativeName>
</protein>
<comment type="function">
    <text evidence="1">Catalyzes the phosphorolysis of diverse nucleosides, yielding D-ribose 1-phosphate and the respective free bases. Can use uridine, adenosine, guanosine, cytidine, thymidine, inosine and xanthosine as substrates. Also catalyzes the reverse reactions.</text>
</comment>
<comment type="catalytic activity">
    <reaction evidence="1">
        <text>a purine D-ribonucleoside + phosphate = a purine nucleobase + alpha-D-ribose 1-phosphate</text>
        <dbReference type="Rhea" id="RHEA:19805"/>
        <dbReference type="ChEBI" id="CHEBI:26386"/>
        <dbReference type="ChEBI" id="CHEBI:43474"/>
        <dbReference type="ChEBI" id="CHEBI:57720"/>
        <dbReference type="ChEBI" id="CHEBI:142355"/>
        <dbReference type="EC" id="2.4.2.1"/>
    </reaction>
</comment>
<comment type="catalytic activity">
    <reaction evidence="1">
        <text>adenosine + phosphate = alpha-D-ribose 1-phosphate + adenine</text>
        <dbReference type="Rhea" id="RHEA:27642"/>
        <dbReference type="ChEBI" id="CHEBI:16335"/>
        <dbReference type="ChEBI" id="CHEBI:16708"/>
        <dbReference type="ChEBI" id="CHEBI:43474"/>
        <dbReference type="ChEBI" id="CHEBI:57720"/>
        <dbReference type="EC" id="2.4.2.1"/>
    </reaction>
</comment>
<comment type="catalytic activity">
    <reaction evidence="1">
        <text>cytidine + phosphate = cytosine + alpha-D-ribose 1-phosphate</text>
        <dbReference type="Rhea" id="RHEA:52540"/>
        <dbReference type="ChEBI" id="CHEBI:16040"/>
        <dbReference type="ChEBI" id="CHEBI:17562"/>
        <dbReference type="ChEBI" id="CHEBI:43474"/>
        <dbReference type="ChEBI" id="CHEBI:57720"/>
        <dbReference type="EC" id="2.4.2.2"/>
    </reaction>
</comment>
<comment type="catalytic activity">
    <reaction evidence="1">
        <text>guanosine + phosphate = alpha-D-ribose 1-phosphate + guanine</text>
        <dbReference type="Rhea" id="RHEA:13233"/>
        <dbReference type="ChEBI" id="CHEBI:16235"/>
        <dbReference type="ChEBI" id="CHEBI:16750"/>
        <dbReference type="ChEBI" id="CHEBI:43474"/>
        <dbReference type="ChEBI" id="CHEBI:57720"/>
        <dbReference type="EC" id="2.4.2.1"/>
    </reaction>
</comment>
<comment type="catalytic activity">
    <reaction evidence="1">
        <text>inosine + phosphate = alpha-D-ribose 1-phosphate + hypoxanthine</text>
        <dbReference type="Rhea" id="RHEA:27646"/>
        <dbReference type="ChEBI" id="CHEBI:17368"/>
        <dbReference type="ChEBI" id="CHEBI:17596"/>
        <dbReference type="ChEBI" id="CHEBI:43474"/>
        <dbReference type="ChEBI" id="CHEBI:57720"/>
        <dbReference type="EC" id="2.4.2.1"/>
    </reaction>
</comment>
<comment type="catalytic activity">
    <reaction evidence="1">
        <text>thymidine + phosphate = 2-deoxy-alpha-D-ribose 1-phosphate + thymine</text>
        <dbReference type="Rhea" id="RHEA:16037"/>
        <dbReference type="ChEBI" id="CHEBI:17748"/>
        <dbReference type="ChEBI" id="CHEBI:17821"/>
        <dbReference type="ChEBI" id="CHEBI:43474"/>
        <dbReference type="ChEBI" id="CHEBI:57259"/>
        <dbReference type="EC" id="2.4.2.2"/>
    </reaction>
</comment>
<comment type="catalytic activity">
    <reaction evidence="1">
        <text>uridine + phosphate = alpha-D-ribose 1-phosphate + uracil</text>
        <dbReference type="Rhea" id="RHEA:24388"/>
        <dbReference type="ChEBI" id="CHEBI:16704"/>
        <dbReference type="ChEBI" id="CHEBI:17568"/>
        <dbReference type="ChEBI" id="CHEBI:43474"/>
        <dbReference type="ChEBI" id="CHEBI:57720"/>
        <dbReference type="EC" id="2.4.2.2"/>
    </reaction>
</comment>
<comment type="catalytic activity">
    <reaction evidence="1">
        <text>xanthosine + phosphate = alpha-D-ribose 1-phosphate + xanthine</text>
        <dbReference type="Rhea" id="RHEA:27638"/>
        <dbReference type="ChEBI" id="CHEBI:17712"/>
        <dbReference type="ChEBI" id="CHEBI:18107"/>
        <dbReference type="ChEBI" id="CHEBI:43474"/>
        <dbReference type="ChEBI" id="CHEBI:57720"/>
        <dbReference type="EC" id="2.4.2.1"/>
    </reaction>
</comment>
<comment type="similarity">
    <text evidence="1">Belongs to the nucleoside phosphorylase PpnP family.</text>
</comment>
<organism>
    <name type="scientific">Shewanella sp. (strain W3-18-1)</name>
    <dbReference type="NCBI Taxonomy" id="351745"/>
    <lineage>
        <taxon>Bacteria</taxon>
        <taxon>Pseudomonadati</taxon>
        <taxon>Pseudomonadota</taxon>
        <taxon>Gammaproteobacteria</taxon>
        <taxon>Alteromonadales</taxon>
        <taxon>Shewanellaceae</taxon>
        <taxon>Shewanella</taxon>
    </lineage>
</organism>
<accession>A1REI6</accession>
<feature type="chain" id="PRO_0000298728" description="Pyrimidine/purine nucleoside phosphorylase">
    <location>
        <begin position="1"/>
        <end position="103"/>
    </location>
</feature>
<name>PPNP_SHESW</name>
<reference key="1">
    <citation type="submission" date="2006-12" db="EMBL/GenBank/DDBJ databases">
        <title>Complete sequence of Shewanella sp. W3-18-1.</title>
        <authorList>
            <consortium name="US DOE Joint Genome Institute"/>
            <person name="Copeland A."/>
            <person name="Lucas S."/>
            <person name="Lapidus A."/>
            <person name="Barry K."/>
            <person name="Detter J.C."/>
            <person name="Glavina del Rio T."/>
            <person name="Hammon N."/>
            <person name="Israni S."/>
            <person name="Dalin E."/>
            <person name="Tice H."/>
            <person name="Pitluck S."/>
            <person name="Chain P."/>
            <person name="Malfatti S."/>
            <person name="Shin M."/>
            <person name="Vergez L."/>
            <person name="Schmutz J."/>
            <person name="Larimer F."/>
            <person name="Land M."/>
            <person name="Hauser L."/>
            <person name="Kyrpides N."/>
            <person name="Lykidis A."/>
            <person name="Tiedje J."/>
            <person name="Richardson P."/>
        </authorList>
    </citation>
    <scope>NUCLEOTIDE SEQUENCE [LARGE SCALE GENOMIC DNA]</scope>
    <source>
        <strain>W3-18-1</strain>
    </source>
</reference>
<dbReference type="EC" id="2.4.2.1" evidence="1"/>
<dbReference type="EC" id="2.4.2.2" evidence="1"/>
<dbReference type="EMBL" id="CP000503">
    <property type="protein sequence ID" value="ABM23081.1"/>
    <property type="molecule type" value="Genomic_DNA"/>
</dbReference>
<dbReference type="RefSeq" id="WP_011787628.1">
    <property type="nucleotide sequence ID" value="NC_008750.1"/>
</dbReference>
<dbReference type="SMR" id="A1REI6"/>
<dbReference type="KEGG" id="shw:Sputw3181_0229"/>
<dbReference type="HOGENOM" id="CLU_157874_1_0_6"/>
<dbReference type="Proteomes" id="UP000002597">
    <property type="component" value="Chromosome"/>
</dbReference>
<dbReference type="GO" id="GO:0005829">
    <property type="term" value="C:cytosol"/>
    <property type="evidence" value="ECO:0007669"/>
    <property type="project" value="TreeGrafter"/>
</dbReference>
<dbReference type="GO" id="GO:0047975">
    <property type="term" value="F:guanosine phosphorylase activity"/>
    <property type="evidence" value="ECO:0007669"/>
    <property type="project" value="UniProtKB-EC"/>
</dbReference>
<dbReference type="GO" id="GO:0004731">
    <property type="term" value="F:purine-nucleoside phosphorylase activity"/>
    <property type="evidence" value="ECO:0007669"/>
    <property type="project" value="UniProtKB-UniRule"/>
</dbReference>
<dbReference type="GO" id="GO:0009032">
    <property type="term" value="F:thymidine phosphorylase activity"/>
    <property type="evidence" value="ECO:0007669"/>
    <property type="project" value="UniProtKB-EC"/>
</dbReference>
<dbReference type="GO" id="GO:0004850">
    <property type="term" value="F:uridine phosphorylase activity"/>
    <property type="evidence" value="ECO:0007669"/>
    <property type="project" value="UniProtKB-EC"/>
</dbReference>
<dbReference type="CDD" id="cd20296">
    <property type="entry name" value="cupin_PpnP-like"/>
    <property type="match status" value="1"/>
</dbReference>
<dbReference type="FunFam" id="2.60.120.10:FF:000016">
    <property type="entry name" value="Pyrimidine/purine nucleoside phosphorylase"/>
    <property type="match status" value="1"/>
</dbReference>
<dbReference type="Gene3D" id="2.60.120.10">
    <property type="entry name" value="Jelly Rolls"/>
    <property type="match status" value="1"/>
</dbReference>
<dbReference type="HAMAP" id="MF_01537">
    <property type="entry name" value="Nucleos_phosphorylase_PpnP"/>
    <property type="match status" value="1"/>
</dbReference>
<dbReference type="InterPro" id="IPR009664">
    <property type="entry name" value="Ppnp"/>
</dbReference>
<dbReference type="InterPro" id="IPR014710">
    <property type="entry name" value="RmlC-like_jellyroll"/>
</dbReference>
<dbReference type="InterPro" id="IPR011051">
    <property type="entry name" value="RmlC_Cupin_sf"/>
</dbReference>
<dbReference type="PANTHER" id="PTHR36540">
    <property type="entry name" value="PYRIMIDINE/PURINE NUCLEOSIDE PHOSPHORYLASE"/>
    <property type="match status" value="1"/>
</dbReference>
<dbReference type="PANTHER" id="PTHR36540:SF1">
    <property type="entry name" value="PYRIMIDINE_PURINE NUCLEOSIDE PHOSPHORYLASE"/>
    <property type="match status" value="1"/>
</dbReference>
<dbReference type="Pfam" id="PF06865">
    <property type="entry name" value="Ppnp"/>
    <property type="match status" value="1"/>
</dbReference>
<dbReference type="SUPFAM" id="SSF51182">
    <property type="entry name" value="RmlC-like cupins"/>
    <property type="match status" value="1"/>
</dbReference>
<proteinExistence type="inferred from homology"/>
<evidence type="ECO:0000255" key="1">
    <source>
        <dbReference type="HAMAP-Rule" id="MF_01537"/>
    </source>
</evidence>
<sequence>MSLLEQVSVSKKANIYFDGKVASRSVFLADGSKQTLGVVLPGEYEFSTSQGEVMEVTSGRFEVLLPESTVWQEFSEGTQFELAANVSFKIRNTAIAEYCCSYL</sequence>
<gene>
    <name evidence="1" type="primary">ppnP</name>
    <name type="ordered locus">Sputw3181_0229</name>
</gene>
<keyword id="KW-0328">Glycosyltransferase</keyword>
<keyword id="KW-0808">Transferase</keyword>